<accession>P07997</accession>
<proteinExistence type="evidence at protein level"/>
<gene>
    <name type="primary">ALAS1</name>
    <name type="synonym">ALASN</name>
</gene>
<comment type="function">
    <text evidence="1">Catalyzes the pyridoxal 5'-phosphate (PLP)-dependent condensation of succinyl-CoA and glycine to form aminolevulinic acid (ALA), with CoA and CO2 as by-products.</text>
</comment>
<comment type="catalytic activity">
    <reaction evidence="1">
        <text>succinyl-CoA + glycine + H(+) = 5-aminolevulinate + CO2 + CoA</text>
        <dbReference type="Rhea" id="RHEA:12921"/>
        <dbReference type="ChEBI" id="CHEBI:15378"/>
        <dbReference type="ChEBI" id="CHEBI:16526"/>
        <dbReference type="ChEBI" id="CHEBI:57287"/>
        <dbReference type="ChEBI" id="CHEBI:57292"/>
        <dbReference type="ChEBI" id="CHEBI:57305"/>
        <dbReference type="ChEBI" id="CHEBI:356416"/>
        <dbReference type="EC" id="2.3.1.37"/>
    </reaction>
    <physiologicalReaction direction="left-to-right" evidence="1">
        <dbReference type="Rhea" id="RHEA:12922"/>
    </physiologicalReaction>
</comment>
<comment type="cofactor">
    <cofactor evidence="1">
        <name>pyridoxal 5'-phosphate</name>
        <dbReference type="ChEBI" id="CHEBI:597326"/>
    </cofactor>
</comment>
<comment type="pathway">
    <text>Porphyrin-containing compound metabolism; protoporphyrin-IX biosynthesis; 5-aminolevulinate from glycine: step 1/1.</text>
</comment>
<comment type="subunit">
    <text evidence="3">Homodimer.</text>
</comment>
<comment type="subcellular location">
    <subcellularLocation>
        <location evidence="3">Mitochondrion inner membrane</location>
        <topology evidence="3">Peripheral membrane protein</topology>
    </subcellularLocation>
    <text evidence="3">Localizes to the matrix side of the mitochondrion inner membrane.</text>
</comment>
<comment type="tissue specificity">
    <text evidence="5">Ubiquitous.</text>
</comment>
<comment type="similarity">
    <text evidence="7">Belongs to the class-II pyridoxal-phosphate-dependent aminotransferase family.</text>
</comment>
<sequence length="635" mass="69948">MEAVVRRCPFLARVSQAFLQKAGPSLLFYAQHCPKMMEAAPPAAARGLATSASRGQQVEETPAAQPEAKKAKEVAQQNTDGSQPPAGHPPAAAVQSSATKCPFLAAQMNHKSSNVFCKASLELQEDVKEMQVDRKGKEFAKIPTNSVVRNTEAEGEEQSGLLKKFKDIMLKQRPESVSHLLQDNLPKSVSTFQYDQFFEKKIDEKKKDHTYRVFKTVNRKAQIFPMADDYSDSLITKKEVSVWCSNDYLGMSRHPRVCGAVMDTLKQHGAGAGGTRNISGTSKFHVDLEKELADLHGKDAALLFSSCFVANDSTLFTLAKMLPGCEIYSDSGNHASMIQGIRNSRVPKHIFRHNDVNHLRELLKKSDPSTPKIVAFETVHSMDGAVCPLEELCDVAHEHGAITFVDEVHAVGLYGARGGGIGDRDGVMHKMDIISGTLGKAFACVGGYISSTSALIDTVRSYAAGFIFTTSLPPMLLAGALESVRTLKSAEGQVLRRQHQRNVKLMRQMLMDAGLPVVHCPSHIIPIRVADAAKNTEICDKLMSQHSIYVQAINYPTVPRGEELLRIAPTPHHTPQMMSYFLEKLLATWKDVGLELKPHSSAECNFCRRPLHFEVMSERERSYFSGMSKLLSVSA</sequence>
<keyword id="KW-0012">Acyltransferase</keyword>
<keyword id="KW-0903">Direct protein sequencing</keyword>
<keyword id="KW-0350">Heme biosynthesis</keyword>
<keyword id="KW-0379">Hydroxylation</keyword>
<keyword id="KW-0472">Membrane</keyword>
<keyword id="KW-0496">Mitochondrion</keyword>
<keyword id="KW-0999">Mitochondrion inner membrane</keyword>
<keyword id="KW-0663">Pyridoxal phosphate</keyword>
<keyword id="KW-1185">Reference proteome</keyword>
<keyword id="KW-0808">Transferase</keyword>
<keyword id="KW-0809">Transit peptide</keyword>
<reference key="1">
    <citation type="journal article" date="1985" name="Eur. J. Biochem.">
        <title>Complete nucleotide sequence of hepatic 5-aminolaevulinate synthase precursor.</title>
        <authorList>
            <person name="Borthwick I.A."/>
            <person name="Srivastava G."/>
            <person name="Day A.R."/>
            <person name="Pirola B.A."/>
            <person name="Snoswell M.A."/>
            <person name="May B.K."/>
            <person name="Elliott W.H."/>
        </authorList>
    </citation>
    <scope>NUCLEOTIDE SEQUENCE [MRNA]</scope>
    <scope>PROTEIN SEQUENCE OF N-TERMINUS</scope>
    <scope>PARTIAL PROTEIN SEQUENCE</scope>
    <source>
        <tissue>Liver</tissue>
    </source>
</reference>
<reference key="2">
    <citation type="journal article" date="1986" name="Nucleic Acids Res.">
        <title>Nucleotide sequence of the chicken 5-aminolevulinate synthase gene.</title>
        <authorList>
            <person name="Maguire D.J."/>
            <person name="Day A.R."/>
            <person name="Borthwick I.A."/>
            <person name="Srivastava G."/>
            <person name="Wigley P.L."/>
            <person name="May B.K."/>
            <person name="Elliott W.H."/>
        </authorList>
    </citation>
    <scope>NUCLEOTIDE SEQUENCE [GENOMIC DNA]</scope>
    <source>
        <tissue>Liver</tissue>
    </source>
</reference>
<reference key="3">
    <citation type="journal article" date="1989" name="Proc. Natl. Acad. Sci. U.S.A.">
        <title>Expression of delta-aminolevulinate synthase in avian cells: separate genes encode erythroid-specific and nonspecific isozymes.</title>
        <authorList>
            <person name="Riddle R.D."/>
            <person name="Yamamoto M."/>
            <person name="Engel J.D."/>
        </authorList>
    </citation>
    <scope>NUCLEOTIDE SEQUENCE [MRNA]</scope>
    <scope>TISSUE SPECIFICITY</scope>
</reference>
<evidence type="ECO:0000250" key="1">
    <source>
        <dbReference type="UniProtKB" id="P13196"/>
    </source>
</evidence>
<evidence type="ECO:0000250" key="2">
    <source>
        <dbReference type="UniProtKB" id="P18079"/>
    </source>
</evidence>
<evidence type="ECO:0000250" key="3">
    <source>
        <dbReference type="UniProtKB" id="P22557"/>
    </source>
</evidence>
<evidence type="ECO:0000256" key="4">
    <source>
        <dbReference type="SAM" id="MobiDB-lite"/>
    </source>
</evidence>
<evidence type="ECO:0000269" key="5">
    <source>
    </source>
</evidence>
<evidence type="ECO:0000269" key="6">
    <source>
    </source>
</evidence>
<evidence type="ECO:0000305" key="7"/>
<organism>
    <name type="scientific">Gallus gallus</name>
    <name type="common">Chicken</name>
    <dbReference type="NCBI Taxonomy" id="9031"/>
    <lineage>
        <taxon>Eukaryota</taxon>
        <taxon>Metazoa</taxon>
        <taxon>Chordata</taxon>
        <taxon>Craniata</taxon>
        <taxon>Vertebrata</taxon>
        <taxon>Euteleostomi</taxon>
        <taxon>Archelosauria</taxon>
        <taxon>Archosauria</taxon>
        <taxon>Dinosauria</taxon>
        <taxon>Saurischia</taxon>
        <taxon>Theropoda</taxon>
        <taxon>Coelurosauria</taxon>
        <taxon>Aves</taxon>
        <taxon>Neognathae</taxon>
        <taxon>Galloanserae</taxon>
        <taxon>Galliformes</taxon>
        <taxon>Phasianidae</taxon>
        <taxon>Phasianinae</taxon>
        <taxon>Gallus</taxon>
    </lineage>
</organism>
<dbReference type="EC" id="2.3.1.37" evidence="1"/>
<dbReference type="EMBL" id="X02827">
    <property type="protein sequence ID" value="CAA26595.1"/>
    <property type="molecule type" value="mRNA"/>
</dbReference>
<dbReference type="EMBL" id="X03517">
    <property type="protein sequence ID" value="CAA27223.1"/>
    <property type="molecule type" value="Genomic_DNA"/>
</dbReference>
<dbReference type="EMBL" id="X03627">
    <property type="protein sequence ID" value="CAA27223.1"/>
    <property type="status" value="JOINED"/>
    <property type="molecule type" value="Genomic_DNA"/>
</dbReference>
<dbReference type="PIR" id="A23538">
    <property type="entry name" value="SYCHAL"/>
</dbReference>
<dbReference type="RefSeq" id="NP_001018012.1">
    <property type="nucleotide sequence ID" value="NM_001018012.1"/>
</dbReference>
<dbReference type="SMR" id="P07997"/>
<dbReference type="FunCoup" id="P07997">
    <property type="interactions" value="726"/>
</dbReference>
<dbReference type="STRING" id="9031.ENSGALP00000046192"/>
<dbReference type="GlyGen" id="P07997">
    <property type="glycosylation" value="1 site"/>
</dbReference>
<dbReference type="PaxDb" id="9031-ENSGALP00000035503"/>
<dbReference type="GeneID" id="552895"/>
<dbReference type="KEGG" id="gga:552895"/>
<dbReference type="CTD" id="211"/>
<dbReference type="VEuPathDB" id="HostDB:geneid_552895"/>
<dbReference type="eggNOG" id="KOG1360">
    <property type="taxonomic scope" value="Eukaryota"/>
</dbReference>
<dbReference type="InParanoid" id="P07997"/>
<dbReference type="OrthoDB" id="10263824at2759"/>
<dbReference type="PhylomeDB" id="P07997"/>
<dbReference type="Reactome" id="R-GGA-421984">
    <property type="pathway name" value="Heme synthesis"/>
</dbReference>
<dbReference type="UniPathway" id="UPA00251">
    <property type="reaction ID" value="UER00375"/>
</dbReference>
<dbReference type="PRO" id="PR:P07997"/>
<dbReference type="Proteomes" id="UP000000539">
    <property type="component" value="Unassembled WGS sequence"/>
</dbReference>
<dbReference type="GO" id="GO:0005829">
    <property type="term" value="C:cytosol"/>
    <property type="evidence" value="ECO:0000304"/>
    <property type="project" value="Reactome"/>
</dbReference>
<dbReference type="GO" id="GO:0005743">
    <property type="term" value="C:mitochondrial inner membrane"/>
    <property type="evidence" value="ECO:0007669"/>
    <property type="project" value="UniProtKB-SubCell"/>
</dbReference>
<dbReference type="GO" id="GO:0005759">
    <property type="term" value="C:mitochondrial matrix"/>
    <property type="evidence" value="ECO:0000304"/>
    <property type="project" value="Reactome"/>
</dbReference>
<dbReference type="GO" id="GO:0005739">
    <property type="term" value="C:mitochondrion"/>
    <property type="evidence" value="ECO:0000318"/>
    <property type="project" value="GO_Central"/>
</dbReference>
<dbReference type="GO" id="GO:0003870">
    <property type="term" value="F:5-aminolevulinate synthase activity"/>
    <property type="evidence" value="ECO:0000250"/>
    <property type="project" value="UniProtKB"/>
</dbReference>
<dbReference type="GO" id="GO:0030170">
    <property type="term" value="F:pyridoxal phosphate binding"/>
    <property type="evidence" value="ECO:0007669"/>
    <property type="project" value="InterPro"/>
</dbReference>
<dbReference type="GO" id="GO:0048821">
    <property type="term" value="P:erythrocyte development"/>
    <property type="evidence" value="ECO:0000318"/>
    <property type="project" value="GO_Central"/>
</dbReference>
<dbReference type="GO" id="GO:0006783">
    <property type="term" value="P:heme biosynthetic process"/>
    <property type="evidence" value="ECO:0000318"/>
    <property type="project" value="GO_Central"/>
</dbReference>
<dbReference type="GO" id="GO:0042541">
    <property type="term" value="P:hemoglobin biosynthetic process"/>
    <property type="evidence" value="ECO:0000318"/>
    <property type="project" value="GO_Central"/>
</dbReference>
<dbReference type="GO" id="GO:0006782">
    <property type="term" value="P:protoporphyrinogen IX biosynthetic process"/>
    <property type="evidence" value="ECO:0007669"/>
    <property type="project" value="UniProtKB-UniPathway"/>
</dbReference>
<dbReference type="GO" id="GO:1903412">
    <property type="term" value="P:response to bile acid"/>
    <property type="evidence" value="ECO:0000250"/>
    <property type="project" value="UniProtKB"/>
</dbReference>
<dbReference type="CDD" id="cd06454">
    <property type="entry name" value="KBL_like"/>
    <property type="match status" value="1"/>
</dbReference>
<dbReference type="FunFam" id="3.90.1150.10:FF:000045">
    <property type="entry name" value="5-aminolevulinate synthase"/>
    <property type="match status" value="1"/>
</dbReference>
<dbReference type="FunFam" id="3.40.640.10:FF:000006">
    <property type="entry name" value="5-aminolevulinate synthase, mitochondrial"/>
    <property type="match status" value="1"/>
</dbReference>
<dbReference type="Gene3D" id="3.90.1150.10">
    <property type="entry name" value="Aspartate Aminotransferase, domain 1"/>
    <property type="match status" value="1"/>
</dbReference>
<dbReference type="Gene3D" id="3.40.640.10">
    <property type="entry name" value="Type I PLP-dependent aspartate aminotransferase-like (Major domain)"/>
    <property type="match status" value="1"/>
</dbReference>
<dbReference type="InterPro" id="IPR010961">
    <property type="entry name" value="4pyrrol_synth_NH2levulA_synth"/>
</dbReference>
<dbReference type="InterPro" id="IPR015118">
    <property type="entry name" value="5aminolev_synth_preseq"/>
</dbReference>
<dbReference type="InterPro" id="IPR001917">
    <property type="entry name" value="Aminotrans_II_pyridoxalP_BS"/>
</dbReference>
<dbReference type="InterPro" id="IPR004839">
    <property type="entry name" value="Aminotransferase_I/II_large"/>
</dbReference>
<dbReference type="InterPro" id="IPR050087">
    <property type="entry name" value="AON_synthase_class-II"/>
</dbReference>
<dbReference type="InterPro" id="IPR015424">
    <property type="entry name" value="PyrdxlP-dep_Trfase"/>
</dbReference>
<dbReference type="InterPro" id="IPR015421">
    <property type="entry name" value="PyrdxlP-dep_Trfase_major"/>
</dbReference>
<dbReference type="InterPro" id="IPR015422">
    <property type="entry name" value="PyrdxlP-dep_Trfase_small"/>
</dbReference>
<dbReference type="NCBIfam" id="TIGR01821">
    <property type="entry name" value="5aminolev_synth"/>
    <property type="match status" value="1"/>
</dbReference>
<dbReference type="PANTHER" id="PTHR13693:SF50">
    <property type="entry name" value="5-AMINOLEVULINATE SYNTHASE, NON-SPECIFIC, MITOCHONDRIAL"/>
    <property type="match status" value="1"/>
</dbReference>
<dbReference type="PANTHER" id="PTHR13693">
    <property type="entry name" value="CLASS II AMINOTRANSFERASE/8-AMINO-7-OXONONANOATE SYNTHASE"/>
    <property type="match status" value="1"/>
</dbReference>
<dbReference type="Pfam" id="PF00155">
    <property type="entry name" value="Aminotran_1_2"/>
    <property type="match status" value="1"/>
</dbReference>
<dbReference type="Pfam" id="PF09029">
    <property type="entry name" value="Preseq_ALAS"/>
    <property type="match status" value="1"/>
</dbReference>
<dbReference type="SUPFAM" id="SSF53383">
    <property type="entry name" value="PLP-dependent transferases"/>
    <property type="match status" value="1"/>
</dbReference>
<dbReference type="PROSITE" id="PS00599">
    <property type="entry name" value="AA_TRANSFER_CLASS_2"/>
    <property type="match status" value="1"/>
</dbReference>
<name>HEM1_CHICK</name>
<feature type="transit peptide" description="Mitochondrion" evidence="6">
    <location>
        <begin position="1"/>
        <end position="56"/>
    </location>
</feature>
<feature type="chain" id="PRO_0000001233" description="5-aminolevulinate synthase, non-specific, mitochondrial">
    <location>
        <begin position="57"/>
        <end position="635"/>
    </location>
</feature>
<feature type="region of interest" description="Disordered" evidence="4">
    <location>
        <begin position="44"/>
        <end position="94"/>
    </location>
</feature>
<feature type="compositionally biased region" description="Low complexity" evidence="4">
    <location>
        <begin position="44"/>
        <end position="66"/>
    </location>
</feature>
<feature type="active site" evidence="2">
    <location>
        <position position="440"/>
    </location>
</feature>
<feature type="binding site" evidence="2">
    <location>
        <position position="212"/>
    </location>
    <ligand>
        <name>substrate</name>
    </ligand>
</feature>
<feature type="binding site" evidence="2">
    <location>
        <position position="329"/>
    </location>
    <ligand>
        <name>substrate</name>
    </ligand>
</feature>
<feature type="binding site" evidence="2">
    <location>
        <position position="348"/>
    </location>
    <ligand>
        <name>substrate</name>
    </ligand>
</feature>
<feature type="binding site" description="in other chain" evidence="2">
    <location>
        <position position="381"/>
    </location>
    <ligand>
        <name>pyridoxal 5'-phosphate</name>
        <dbReference type="ChEBI" id="CHEBI:597326"/>
        <note>ligand shared between dimeric partners</note>
    </ligand>
</feature>
<feature type="binding site" description="in other chain" evidence="2">
    <location>
        <position position="409"/>
    </location>
    <ligand>
        <name>pyridoxal 5'-phosphate</name>
        <dbReference type="ChEBI" id="CHEBI:597326"/>
        <note>ligand shared between dimeric partners</note>
    </ligand>
</feature>
<feature type="binding site" description="in other chain" evidence="2">
    <location>
        <position position="437"/>
    </location>
    <ligand>
        <name>pyridoxal 5'-phosphate</name>
        <dbReference type="ChEBI" id="CHEBI:597326"/>
        <note>ligand shared between dimeric partners</note>
    </ligand>
</feature>
<feature type="binding site" evidence="2">
    <location>
        <position position="469"/>
    </location>
    <ligand>
        <name>pyridoxal 5'-phosphate</name>
        <dbReference type="ChEBI" id="CHEBI:597326"/>
        <note>ligand shared between dimeric partners</note>
    </ligand>
</feature>
<feature type="binding site" evidence="2">
    <location>
        <position position="470"/>
    </location>
    <ligand>
        <name>pyridoxal 5'-phosphate</name>
        <dbReference type="ChEBI" id="CHEBI:597326"/>
        <note>ligand shared between dimeric partners</note>
    </ligand>
</feature>
<feature type="binding site" evidence="2">
    <location>
        <position position="557"/>
    </location>
    <ligand>
        <name>substrate</name>
    </ligand>
</feature>
<feature type="modified residue" description="N6-(pyridoxal phosphate)lysine" evidence="2">
    <location>
        <position position="440"/>
    </location>
</feature>
<feature type="sequence conflict" description="In Ref. 1; CAA26595 and 3; no nucleotide entry." evidence="7" ref="1 3">
    <original>S</original>
    <variation>A</variation>
    <location>
        <position position="53"/>
    </location>
</feature>
<protein>
    <recommendedName>
        <fullName>5-aminolevulinate synthase, non-specific, mitochondrial</fullName>
        <shortName>ALAS-H</shortName>
        <ecNumber evidence="1">2.3.1.37</ecNumber>
    </recommendedName>
    <alternativeName>
        <fullName>5-aminolevulinic acid synthase 1</fullName>
    </alternativeName>
    <alternativeName>
        <fullName>Delta-ALA synthase 1</fullName>
    </alternativeName>
    <alternativeName>
        <fullName>Delta-aminolevulinate synthase 1</fullName>
    </alternativeName>
</protein>